<accession>Q8TUG3</accession>
<dbReference type="EC" id="3.1.3.5" evidence="1"/>
<dbReference type="EMBL" id="AE010299">
    <property type="protein sequence ID" value="AAM03558.1"/>
    <property type="molecule type" value="Genomic_DNA"/>
</dbReference>
<dbReference type="RefSeq" id="WP_011020163.1">
    <property type="nucleotide sequence ID" value="NC_003552.1"/>
</dbReference>
<dbReference type="SMR" id="Q8TUG3"/>
<dbReference type="FunCoup" id="Q8TUG3">
    <property type="interactions" value="28"/>
</dbReference>
<dbReference type="STRING" id="188937.MA_0104"/>
<dbReference type="EnsemblBacteria" id="AAM03558">
    <property type="protein sequence ID" value="AAM03558"/>
    <property type="gene ID" value="MA_0104"/>
</dbReference>
<dbReference type="GeneID" id="1471996"/>
<dbReference type="KEGG" id="mac:MA_0104"/>
<dbReference type="HOGENOM" id="CLU_045192_1_3_2"/>
<dbReference type="InParanoid" id="Q8TUG3"/>
<dbReference type="OrthoDB" id="26873at2157"/>
<dbReference type="PhylomeDB" id="Q8TUG3"/>
<dbReference type="Proteomes" id="UP000002487">
    <property type="component" value="Chromosome"/>
</dbReference>
<dbReference type="GO" id="GO:0005737">
    <property type="term" value="C:cytoplasm"/>
    <property type="evidence" value="ECO:0007669"/>
    <property type="project" value="UniProtKB-SubCell"/>
</dbReference>
<dbReference type="GO" id="GO:0008253">
    <property type="term" value="F:5'-nucleotidase activity"/>
    <property type="evidence" value="ECO:0007669"/>
    <property type="project" value="UniProtKB-UniRule"/>
</dbReference>
<dbReference type="GO" id="GO:0046872">
    <property type="term" value="F:metal ion binding"/>
    <property type="evidence" value="ECO:0007669"/>
    <property type="project" value="UniProtKB-UniRule"/>
</dbReference>
<dbReference type="GO" id="GO:0000166">
    <property type="term" value="F:nucleotide binding"/>
    <property type="evidence" value="ECO:0007669"/>
    <property type="project" value="UniProtKB-KW"/>
</dbReference>
<dbReference type="Gene3D" id="3.40.1210.10">
    <property type="entry name" value="Survival protein SurE-like phosphatase/nucleotidase"/>
    <property type="match status" value="1"/>
</dbReference>
<dbReference type="HAMAP" id="MF_00060">
    <property type="entry name" value="SurE"/>
    <property type="match status" value="1"/>
</dbReference>
<dbReference type="InterPro" id="IPR030048">
    <property type="entry name" value="SurE"/>
</dbReference>
<dbReference type="InterPro" id="IPR002828">
    <property type="entry name" value="SurE-like_Pase/nucleotidase"/>
</dbReference>
<dbReference type="InterPro" id="IPR036523">
    <property type="entry name" value="SurE-like_sf"/>
</dbReference>
<dbReference type="NCBIfam" id="NF001491">
    <property type="entry name" value="PRK00346.2-1"/>
    <property type="match status" value="1"/>
</dbReference>
<dbReference type="NCBIfam" id="TIGR00087">
    <property type="entry name" value="surE"/>
    <property type="match status" value="1"/>
</dbReference>
<dbReference type="PANTHER" id="PTHR30457">
    <property type="entry name" value="5'-NUCLEOTIDASE SURE"/>
    <property type="match status" value="1"/>
</dbReference>
<dbReference type="PANTHER" id="PTHR30457:SF0">
    <property type="entry name" value="PHOSPHATASE, PUTATIVE (AFU_ORTHOLOGUE AFUA_4G01070)-RELATED"/>
    <property type="match status" value="1"/>
</dbReference>
<dbReference type="Pfam" id="PF01975">
    <property type="entry name" value="SurE"/>
    <property type="match status" value="1"/>
</dbReference>
<dbReference type="SUPFAM" id="SSF64167">
    <property type="entry name" value="SurE-like"/>
    <property type="match status" value="1"/>
</dbReference>
<proteinExistence type="inferred from homology"/>
<comment type="function">
    <text evidence="1">Nucleotidase that shows phosphatase activity on nucleoside 5'-monophosphates.</text>
</comment>
<comment type="catalytic activity">
    <reaction evidence="1">
        <text>a ribonucleoside 5'-phosphate + H2O = a ribonucleoside + phosphate</text>
        <dbReference type="Rhea" id="RHEA:12484"/>
        <dbReference type="ChEBI" id="CHEBI:15377"/>
        <dbReference type="ChEBI" id="CHEBI:18254"/>
        <dbReference type="ChEBI" id="CHEBI:43474"/>
        <dbReference type="ChEBI" id="CHEBI:58043"/>
        <dbReference type="EC" id="3.1.3.5"/>
    </reaction>
</comment>
<comment type="cofactor">
    <cofactor evidence="1">
        <name>a divalent metal cation</name>
        <dbReference type="ChEBI" id="CHEBI:60240"/>
    </cofactor>
    <text evidence="1">Binds 1 divalent metal cation per subunit.</text>
</comment>
<comment type="subcellular location">
    <subcellularLocation>
        <location evidence="1">Cytoplasm</location>
    </subcellularLocation>
</comment>
<comment type="similarity">
    <text evidence="1">Belongs to the SurE nucleotidase family.</text>
</comment>
<reference key="1">
    <citation type="journal article" date="2002" name="Genome Res.">
        <title>The genome of Methanosarcina acetivorans reveals extensive metabolic and physiological diversity.</title>
        <authorList>
            <person name="Galagan J.E."/>
            <person name="Nusbaum C."/>
            <person name="Roy A."/>
            <person name="Endrizzi M.G."/>
            <person name="Macdonald P."/>
            <person name="FitzHugh W."/>
            <person name="Calvo S."/>
            <person name="Engels R."/>
            <person name="Smirnov S."/>
            <person name="Atnoor D."/>
            <person name="Brown A."/>
            <person name="Allen N."/>
            <person name="Naylor J."/>
            <person name="Stange-Thomann N."/>
            <person name="DeArellano K."/>
            <person name="Johnson R."/>
            <person name="Linton L."/>
            <person name="McEwan P."/>
            <person name="McKernan K."/>
            <person name="Talamas J."/>
            <person name="Tirrell A."/>
            <person name="Ye W."/>
            <person name="Zimmer A."/>
            <person name="Barber R.D."/>
            <person name="Cann I."/>
            <person name="Graham D.E."/>
            <person name="Grahame D.A."/>
            <person name="Guss A.M."/>
            <person name="Hedderich R."/>
            <person name="Ingram-Smith C."/>
            <person name="Kuettner H.C."/>
            <person name="Krzycki J.A."/>
            <person name="Leigh J.A."/>
            <person name="Li W."/>
            <person name="Liu J."/>
            <person name="Mukhopadhyay B."/>
            <person name="Reeve J.N."/>
            <person name="Smith K."/>
            <person name="Springer T.A."/>
            <person name="Umayam L.A."/>
            <person name="White O."/>
            <person name="White R.H."/>
            <person name="de Macario E.C."/>
            <person name="Ferry J.G."/>
            <person name="Jarrell K.F."/>
            <person name="Jing H."/>
            <person name="Macario A.J.L."/>
            <person name="Paulsen I.T."/>
            <person name="Pritchett M."/>
            <person name="Sowers K.R."/>
            <person name="Swanson R.V."/>
            <person name="Zinder S.H."/>
            <person name="Lander E."/>
            <person name="Metcalf W.W."/>
            <person name="Birren B."/>
        </authorList>
    </citation>
    <scope>NUCLEOTIDE SEQUENCE [LARGE SCALE GENOMIC DNA]</scope>
    <source>
        <strain>ATCC 35395 / DSM 2834 / JCM 12185 / C2A</strain>
    </source>
</reference>
<gene>
    <name evidence="1" type="primary">surE</name>
    <name type="ordered locus">MA_0104</name>
</gene>
<feature type="chain" id="PRO_0000111863" description="5'-nucleotidase SurE">
    <location>
        <begin position="1"/>
        <end position="267"/>
    </location>
</feature>
<feature type="binding site" evidence="1">
    <location>
        <position position="14"/>
    </location>
    <ligand>
        <name>a divalent metal cation</name>
        <dbReference type="ChEBI" id="CHEBI:60240"/>
    </ligand>
</feature>
<feature type="binding site" evidence="1">
    <location>
        <position position="15"/>
    </location>
    <ligand>
        <name>a divalent metal cation</name>
        <dbReference type="ChEBI" id="CHEBI:60240"/>
    </ligand>
</feature>
<feature type="binding site" evidence="1">
    <location>
        <position position="45"/>
    </location>
    <ligand>
        <name>a divalent metal cation</name>
        <dbReference type="ChEBI" id="CHEBI:60240"/>
    </ligand>
</feature>
<feature type="binding site" evidence="1">
    <location>
        <position position="100"/>
    </location>
    <ligand>
        <name>a divalent metal cation</name>
        <dbReference type="ChEBI" id="CHEBI:60240"/>
    </ligand>
</feature>
<evidence type="ECO:0000255" key="1">
    <source>
        <dbReference type="HAMAP-Rule" id="MF_00060"/>
    </source>
</evidence>
<organism>
    <name type="scientific">Methanosarcina acetivorans (strain ATCC 35395 / DSM 2834 / JCM 12185 / C2A)</name>
    <dbReference type="NCBI Taxonomy" id="188937"/>
    <lineage>
        <taxon>Archaea</taxon>
        <taxon>Methanobacteriati</taxon>
        <taxon>Methanobacteriota</taxon>
        <taxon>Stenosarchaea group</taxon>
        <taxon>Methanomicrobia</taxon>
        <taxon>Methanosarcinales</taxon>
        <taxon>Methanosarcinaceae</taxon>
        <taxon>Methanosarcina</taxon>
    </lineage>
</organism>
<keyword id="KW-0963">Cytoplasm</keyword>
<keyword id="KW-0378">Hydrolase</keyword>
<keyword id="KW-0479">Metal-binding</keyword>
<keyword id="KW-0547">Nucleotide-binding</keyword>
<keyword id="KW-1185">Reference proteome</keyword>
<protein>
    <recommendedName>
        <fullName evidence="1">5'-nucleotidase SurE</fullName>
        <ecNumber evidence="1">3.1.3.5</ecNumber>
    </recommendedName>
    <alternativeName>
        <fullName evidence="1">Nucleoside 5'-monophosphate phosphohydrolase</fullName>
    </alternativeName>
</protein>
<sequence>MGKLMAPKILVTNDDGVYSTGLKAAFDSVSDLGEVTISAPAVQQSGVGRSISIFEPLRITKTDVGGIPAYAVGGTPTDSVILGIFTILKQMPDLVLSGFNIGENISTDTITTSGTIGGALEAASYGIPAIAASMQVLDEGQKFDDPRDYHRERFEAGIKIVNKIARNVLRHGMPENVDLLNINIPYHAEEDTPIEITRLARKVFKTDVEERRDPRGRSYYWIAGDLIREEEEGTDVHAVMQKGYVSITPISLDSTARIEFSEIEKYL</sequence>
<name>SURE_METAC</name>